<evidence type="ECO:0000250" key="1"/>
<evidence type="ECO:0000255" key="2"/>
<evidence type="ECO:0000255" key="3">
    <source>
        <dbReference type="PROSITE-ProRule" id="PRU00102"/>
    </source>
</evidence>
<evidence type="ECO:0000255" key="4">
    <source>
        <dbReference type="PROSITE-ProRule" id="PRU00107"/>
    </source>
</evidence>
<keyword id="KW-0067">ATP-binding</keyword>
<keyword id="KW-0997">Cell inner membrane</keyword>
<keyword id="KW-1003">Cell membrane</keyword>
<keyword id="KW-0418">Kinase</keyword>
<keyword id="KW-0472">Membrane</keyword>
<keyword id="KW-0547">Nucleotide-binding</keyword>
<keyword id="KW-0597">Phosphoprotein</keyword>
<keyword id="KW-1185">Reference proteome</keyword>
<keyword id="KW-0808">Transferase</keyword>
<keyword id="KW-0812">Transmembrane</keyword>
<keyword id="KW-1133">Transmembrane helix</keyword>
<keyword id="KW-0902">Two-component regulatory system</keyword>
<dbReference type="EC" id="2.7.13.3"/>
<dbReference type="EMBL" id="L42023">
    <property type="protein sequence ID" value="AAC21933.1"/>
    <property type="molecule type" value="Genomic_DNA"/>
</dbReference>
<dbReference type="PIR" id="F64058">
    <property type="entry name" value="F64058"/>
</dbReference>
<dbReference type="RefSeq" id="NP_438436.1">
    <property type="nucleotide sequence ID" value="NC_000907.1"/>
</dbReference>
<dbReference type="SMR" id="P44604"/>
<dbReference type="STRING" id="71421.HI_0267"/>
<dbReference type="EnsemblBacteria" id="AAC21933">
    <property type="protein sequence ID" value="AAC21933"/>
    <property type="gene ID" value="HI_0267"/>
</dbReference>
<dbReference type="KEGG" id="hin:HI_0267"/>
<dbReference type="PATRIC" id="fig|71421.8.peg.282"/>
<dbReference type="eggNOG" id="COG3850">
    <property type="taxonomic scope" value="Bacteria"/>
</dbReference>
<dbReference type="HOGENOM" id="CLU_000445_20_10_6"/>
<dbReference type="OrthoDB" id="9811306at2"/>
<dbReference type="PhylomeDB" id="P44604"/>
<dbReference type="BioCyc" id="HINF71421:G1GJ1-282-MONOMER"/>
<dbReference type="BRENDA" id="2.7.13.3">
    <property type="organism ID" value="2529"/>
</dbReference>
<dbReference type="Proteomes" id="UP000000579">
    <property type="component" value="Chromosome"/>
</dbReference>
<dbReference type="GO" id="GO:0005886">
    <property type="term" value="C:plasma membrane"/>
    <property type="evidence" value="ECO:0000318"/>
    <property type="project" value="GO_Central"/>
</dbReference>
<dbReference type="GO" id="GO:0005524">
    <property type="term" value="F:ATP binding"/>
    <property type="evidence" value="ECO:0007669"/>
    <property type="project" value="UniProtKB-KW"/>
</dbReference>
<dbReference type="GO" id="GO:0000155">
    <property type="term" value="F:phosphorelay sensor kinase activity"/>
    <property type="evidence" value="ECO:0000318"/>
    <property type="project" value="GO_Central"/>
</dbReference>
<dbReference type="GO" id="GO:0046983">
    <property type="term" value="F:protein dimerization activity"/>
    <property type="evidence" value="ECO:0007669"/>
    <property type="project" value="InterPro"/>
</dbReference>
<dbReference type="GO" id="GO:0007165">
    <property type="term" value="P:signal transduction"/>
    <property type="evidence" value="ECO:0000318"/>
    <property type="project" value="GO_Central"/>
</dbReference>
<dbReference type="CDD" id="cd06225">
    <property type="entry name" value="HAMP"/>
    <property type="match status" value="1"/>
</dbReference>
<dbReference type="CDD" id="cd16917">
    <property type="entry name" value="HATPase_UhpB-NarQ-NarX-like"/>
    <property type="match status" value="1"/>
</dbReference>
<dbReference type="CDD" id="cd22899">
    <property type="entry name" value="NarQ_sensor"/>
    <property type="match status" value="1"/>
</dbReference>
<dbReference type="Gene3D" id="1.20.5.1930">
    <property type="match status" value="1"/>
</dbReference>
<dbReference type="Gene3D" id="6.10.340.10">
    <property type="match status" value="1"/>
</dbReference>
<dbReference type="Gene3D" id="1.20.120.960">
    <property type="entry name" value="Histidine kinase NarX, sensor domain"/>
    <property type="match status" value="1"/>
</dbReference>
<dbReference type="Gene3D" id="3.30.565.10">
    <property type="entry name" value="Histidine kinase-like ATPase, C-terminal domain"/>
    <property type="match status" value="1"/>
</dbReference>
<dbReference type="InterPro" id="IPR003660">
    <property type="entry name" value="HAMP_dom"/>
</dbReference>
<dbReference type="InterPro" id="IPR036890">
    <property type="entry name" value="HATPase_C_sf"/>
</dbReference>
<dbReference type="InterPro" id="IPR005467">
    <property type="entry name" value="His_kinase_dom"/>
</dbReference>
<dbReference type="InterPro" id="IPR029095">
    <property type="entry name" value="NarX-like_N"/>
</dbReference>
<dbReference type="InterPro" id="IPR042295">
    <property type="entry name" value="NarX-like_N_sf"/>
</dbReference>
<dbReference type="InterPro" id="IPR050482">
    <property type="entry name" value="Sensor_HK_TwoCompSys"/>
</dbReference>
<dbReference type="InterPro" id="IPR016380">
    <property type="entry name" value="Sig_transdc_His_kin_NarX/NarQ"/>
</dbReference>
<dbReference type="InterPro" id="IPR011712">
    <property type="entry name" value="Sig_transdc_His_kin_sub3_dim/P"/>
</dbReference>
<dbReference type="NCBIfam" id="NF008184">
    <property type="entry name" value="PRK10935.1"/>
    <property type="match status" value="1"/>
</dbReference>
<dbReference type="PANTHER" id="PTHR24421">
    <property type="entry name" value="NITRATE/NITRITE SENSOR PROTEIN NARX-RELATED"/>
    <property type="match status" value="1"/>
</dbReference>
<dbReference type="PANTHER" id="PTHR24421:SF10">
    <property type="entry name" value="NITRATE_NITRITE SENSOR PROTEIN NARQ"/>
    <property type="match status" value="1"/>
</dbReference>
<dbReference type="Pfam" id="PF00672">
    <property type="entry name" value="HAMP"/>
    <property type="match status" value="1"/>
</dbReference>
<dbReference type="Pfam" id="PF02518">
    <property type="entry name" value="HATPase_c"/>
    <property type="match status" value="1"/>
</dbReference>
<dbReference type="Pfam" id="PF07730">
    <property type="entry name" value="HisKA_3"/>
    <property type="match status" value="1"/>
</dbReference>
<dbReference type="Pfam" id="PF13675">
    <property type="entry name" value="PilJ"/>
    <property type="match status" value="1"/>
</dbReference>
<dbReference type="PIRSF" id="PIRSF003167">
    <property type="entry name" value="STHK_NarX/NarQ"/>
    <property type="match status" value="1"/>
</dbReference>
<dbReference type="SMART" id="SM00304">
    <property type="entry name" value="HAMP"/>
    <property type="match status" value="1"/>
</dbReference>
<dbReference type="SMART" id="SM00387">
    <property type="entry name" value="HATPase_c"/>
    <property type="match status" value="1"/>
</dbReference>
<dbReference type="SUPFAM" id="SSF55874">
    <property type="entry name" value="ATPase domain of HSP90 chaperone/DNA topoisomerase II/histidine kinase"/>
    <property type="match status" value="1"/>
</dbReference>
<dbReference type="PROSITE" id="PS50885">
    <property type="entry name" value="HAMP"/>
    <property type="match status" value="1"/>
</dbReference>
<dbReference type="PROSITE" id="PS50109">
    <property type="entry name" value="HIS_KIN"/>
    <property type="match status" value="1"/>
</dbReference>
<comment type="function">
    <text>Probable member of a two-component regulatory system. It is not known what protein it phosphorylates and in which regulatory pathway it acts, as the narL and other nar genes do not exist in H.influenzae.</text>
</comment>
<comment type="catalytic activity">
    <reaction>
        <text>ATP + protein L-histidine = ADP + protein N-phospho-L-histidine.</text>
        <dbReference type="EC" id="2.7.13.3"/>
    </reaction>
</comment>
<comment type="subcellular location">
    <subcellularLocation>
        <location evidence="1">Cell inner membrane</location>
        <topology evidence="1">Multi-pass membrane protein</topology>
    </subcellularLocation>
</comment>
<sequence length="567" mass="65238">MYTKGSVSTRIAKYLFIILIVAGVISSLSLAIMSSNKYDAEAINISGSLRMQSYRLLYEMQEQPESVETNLRRYHISLHSSALLEVQNQFFTPNVLKHSYQNILQRWTNMEKYARQQDVKNYSKQLTDYVADVDYFVFELQRFSEQKWILGVSVLGFAMLLILLMVSYVIWYTNREVVKPLHLMTKASMQVQMRQFNHIPLDTRKQNELGTLARVFTQMSTELGQLYSRLEEAVNEKTQKLRQTNRTLSTLYQSAQLLNTNTINDKILNQVLNYIFISDHLNFVKVEVMGAEHWDITLGKQDANNELQIETLSVDNEELGVLSWQAGLPCPDPRIMQNLAQMLARALYFHKNLRQKEQLLLMEERSIIARELHDSLAQVLSFLQIQLTLLKHNLKKEDEQSKEKSLAIIANFEQALSGGYAQLRELLATFRLTIQEANLQLALKQVIDSLRSQTTMQMNVNCQLPSQSLNPQQLVHVLQIVREATTNAIKHSQGTVIEISARINAEGEYEILVEDDGVGIPNLEEPEGHYGLNIMAERCRQLNAQLHIHRREQGGTQVKITLPHTLY</sequence>
<proteinExistence type="inferred from homology"/>
<reference key="1">
    <citation type="journal article" date="1995" name="Science">
        <title>Whole-genome random sequencing and assembly of Haemophilus influenzae Rd.</title>
        <authorList>
            <person name="Fleischmann R.D."/>
            <person name="Adams M.D."/>
            <person name="White O."/>
            <person name="Clayton R.A."/>
            <person name="Kirkness E.F."/>
            <person name="Kerlavage A.R."/>
            <person name="Bult C.J."/>
            <person name="Tomb J.-F."/>
            <person name="Dougherty B.A."/>
            <person name="Merrick J.M."/>
            <person name="McKenney K."/>
            <person name="Sutton G.G."/>
            <person name="FitzHugh W."/>
            <person name="Fields C.A."/>
            <person name="Gocayne J.D."/>
            <person name="Scott J.D."/>
            <person name="Shirley R."/>
            <person name="Liu L.-I."/>
            <person name="Glodek A."/>
            <person name="Kelley J.M."/>
            <person name="Weidman J.F."/>
            <person name="Phillips C.A."/>
            <person name="Spriggs T."/>
            <person name="Hedblom E."/>
            <person name="Cotton M.D."/>
            <person name="Utterback T.R."/>
            <person name="Hanna M.C."/>
            <person name="Nguyen D.T."/>
            <person name="Saudek D.M."/>
            <person name="Brandon R.C."/>
            <person name="Fine L.D."/>
            <person name="Fritchman J.L."/>
            <person name="Fuhrmann J.L."/>
            <person name="Geoghagen N.S.M."/>
            <person name="Gnehm C.L."/>
            <person name="McDonald L.A."/>
            <person name="Small K.V."/>
            <person name="Fraser C.M."/>
            <person name="Smith H.O."/>
            <person name="Venter J.C."/>
        </authorList>
    </citation>
    <scope>NUCLEOTIDE SEQUENCE [LARGE SCALE GENOMIC DNA]</scope>
    <source>
        <strain>ATCC 51907 / DSM 11121 / KW20 / Rd</strain>
    </source>
</reference>
<organism>
    <name type="scientific">Haemophilus influenzae (strain ATCC 51907 / DSM 11121 / KW20 / Rd)</name>
    <dbReference type="NCBI Taxonomy" id="71421"/>
    <lineage>
        <taxon>Bacteria</taxon>
        <taxon>Pseudomonadati</taxon>
        <taxon>Pseudomonadota</taxon>
        <taxon>Gammaproteobacteria</taxon>
        <taxon>Pasteurellales</taxon>
        <taxon>Pasteurellaceae</taxon>
        <taxon>Haemophilus</taxon>
    </lineage>
</organism>
<name>NARQ_HAEIN</name>
<feature type="chain" id="PRO_0000074811" description="Sensor protein NarQ homolog">
    <location>
        <begin position="1"/>
        <end position="567"/>
    </location>
</feature>
<feature type="topological domain" description="Cytoplasmic" evidence="2">
    <location>
        <begin position="1"/>
        <end position="13"/>
    </location>
</feature>
<feature type="transmembrane region" description="Helical" evidence="2">
    <location>
        <begin position="14"/>
        <end position="34"/>
    </location>
</feature>
<feature type="topological domain" description="Periplasmic" evidence="2">
    <location>
        <begin position="35"/>
        <end position="147"/>
    </location>
</feature>
<feature type="transmembrane region" description="Helical" evidence="2">
    <location>
        <begin position="148"/>
        <end position="172"/>
    </location>
</feature>
<feature type="topological domain" description="Cytoplasmic" evidence="2">
    <location>
        <begin position="173"/>
        <end position="567"/>
    </location>
</feature>
<feature type="domain" description="HAMP" evidence="3">
    <location>
        <begin position="175"/>
        <end position="228"/>
    </location>
</feature>
<feature type="domain" description="Histidine kinase" evidence="4">
    <location>
        <begin position="367"/>
        <end position="566"/>
    </location>
</feature>
<feature type="modified residue" description="Phosphohistidine; by autocatalysis" evidence="4">
    <location>
        <position position="373"/>
    </location>
</feature>
<protein>
    <recommendedName>
        <fullName>Sensor protein NarQ homolog</fullName>
        <ecNumber>2.7.13.3</ecNumber>
    </recommendedName>
</protein>
<accession>P44604</accession>
<gene>
    <name type="primary">narQ</name>
    <name type="ordered locus">HI_0267</name>
</gene>